<organism>
    <name type="scientific">Rattus norvegicus</name>
    <name type="common">Rat</name>
    <dbReference type="NCBI Taxonomy" id="10116"/>
    <lineage>
        <taxon>Eukaryota</taxon>
        <taxon>Metazoa</taxon>
        <taxon>Chordata</taxon>
        <taxon>Craniata</taxon>
        <taxon>Vertebrata</taxon>
        <taxon>Euteleostomi</taxon>
        <taxon>Mammalia</taxon>
        <taxon>Eutheria</taxon>
        <taxon>Euarchontoglires</taxon>
        <taxon>Glires</taxon>
        <taxon>Rodentia</taxon>
        <taxon>Myomorpha</taxon>
        <taxon>Muroidea</taxon>
        <taxon>Muridae</taxon>
        <taxon>Murinae</taxon>
        <taxon>Rattus</taxon>
    </lineage>
</organism>
<name>GUAA_RAT</name>
<reference key="1">
    <citation type="journal article" date="2004" name="Genome Res.">
        <title>The status, quality, and expansion of the NIH full-length cDNA project: the Mammalian Gene Collection (MGC).</title>
        <authorList>
            <consortium name="The MGC Project Team"/>
        </authorList>
    </citation>
    <scope>NUCLEOTIDE SEQUENCE [LARGE SCALE MRNA]</scope>
    <source>
        <tissue>Testis</tissue>
    </source>
</reference>
<reference key="2">
    <citation type="submission" date="2009-01" db="UniProtKB">
        <authorList>
            <person name="Maurya D.K."/>
            <person name="Bhargava P."/>
        </authorList>
    </citation>
    <scope>IDENTIFICATION BY MASS SPECTROMETRY</scope>
</reference>
<reference key="3">
    <citation type="journal article" date="2012" name="Nat. Commun.">
        <title>Quantitative maps of protein phosphorylation sites across 14 different rat organs and tissues.</title>
        <authorList>
            <person name="Lundby A."/>
            <person name="Secher A."/>
            <person name="Lage K."/>
            <person name="Nordsborg N.B."/>
            <person name="Dmytriyev A."/>
            <person name="Lundby C."/>
            <person name="Olsen J.V."/>
        </authorList>
    </citation>
    <scope>PHOSPHORYLATION [LARGE SCALE ANALYSIS] AT SER-332</scope>
    <scope>IDENTIFICATION BY MASS SPECTROMETRY [LARGE SCALE ANALYSIS]</scope>
</reference>
<reference key="4">
    <citation type="journal article" date="1987" name="J. Biochem.">
        <title>Purification and characterization of GMP synthetase from Yoshida sarcoma ascites cells.</title>
        <authorList>
            <person name="Hirai K."/>
            <person name="Matsuda Y."/>
            <person name="Nakagawa H."/>
        </authorList>
    </citation>
    <scope>FUNCTION</scope>
    <scope>CATALYTIC ACTIVITY</scope>
    <scope>COFACTOR</scope>
    <scope>SUBCELLULAR LOCATION</scope>
    <scope>TISSUE SPECIFICITY</scope>
</reference>
<proteinExistence type="evidence at protein level"/>
<keyword id="KW-0007">Acetylation</keyword>
<keyword id="KW-0067">ATP-binding</keyword>
<keyword id="KW-0963">Cytoplasm</keyword>
<keyword id="KW-0315">Glutamine amidotransferase</keyword>
<keyword id="KW-0332">GMP biosynthesis</keyword>
<keyword id="KW-0436">Ligase</keyword>
<keyword id="KW-0547">Nucleotide-binding</keyword>
<keyword id="KW-0597">Phosphoprotein</keyword>
<keyword id="KW-0658">Purine biosynthesis</keyword>
<keyword id="KW-1185">Reference proteome</keyword>
<gene>
    <name type="primary">Gmps</name>
</gene>
<comment type="function">
    <text evidence="4">Catalyzes the conversion of xanthine monophosphate (XMP) to GMP in the presence of glutamine and ATP through an adenyl-XMP intermediate.</text>
</comment>
<comment type="catalytic activity">
    <reaction evidence="4">
        <text>XMP + L-glutamine + ATP + H2O = GMP + L-glutamate + AMP + diphosphate + 2 H(+)</text>
        <dbReference type="Rhea" id="RHEA:11680"/>
        <dbReference type="ChEBI" id="CHEBI:15377"/>
        <dbReference type="ChEBI" id="CHEBI:15378"/>
        <dbReference type="ChEBI" id="CHEBI:29985"/>
        <dbReference type="ChEBI" id="CHEBI:30616"/>
        <dbReference type="ChEBI" id="CHEBI:33019"/>
        <dbReference type="ChEBI" id="CHEBI:57464"/>
        <dbReference type="ChEBI" id="CHEBI:58115"/>
        <dbReference type="ChEBI" id="CHEBI:58359"/>
        <dbReference type="ChEBI" id="CHEBI:456215"/>
        <dbReference type="EC" id="6.3.5.2"/>
    </reaction>
    <physiologicalReaction direction="left-to-right" evidence="5">
        <dbReference type="Rhea" id="RHEA:11681"/>
    </physiologicalReaction>
</comment>
<comment type="cofactor">
    <cofactor evidence="4">
        <name>Mg(2+)</name>
        <dbReference type="ChEBI" id="CHEBI:18420"/>
    </cofactor>
</comment>
<comment type="biophysicochemical properties">
    <kinetics>
        <KM evidence="4">4.6 uM for XMP</KM>
        <KM evidence="4">120 uM for ATP</KM>
        <KM evidence="4">300 uM for glutamine</KM>
    </kinetics>
    <phDependence>
        <text evidence="4">Optimum pH is 7.8-8.0.</text>
    </phDependence>
</comment>
<comment type="pathway">
    <text>Purine metabolism; GMP biosynthesis; GMP from XMP (L-Gln route): step 1/1.</text>
</comment>
<comment type="subunit">
    <text evidence="1">Homodimer.</text>
</comment>
<comment type="subcellular location">
    <subcellularLocation>
        <location evidence="4">Cytoplasm</location>
        <location evidence="4">Cytosol</location>
    </subcellularLocation>
</comment>
<comment type="tissue specificity">
    <text evidence="4">Expressed in the testis, brain, thymus and ovary.</text>
</comment>
<dbReference type="EC" id="6.3.5.2" evidence="4"/>
<dbReference type="EMBL" id="BC098016">
    <property type="protein sequence ID" value="AAH98016.1"/>
    <property type="molecule type" value="mRNA"/>
</dbReference>
<dbReference type="RefSeq" id="NP_001019925.1">
    <property type="nucleotide sequence ID" value="NM_001024754.1"/>
</dbReference>
<dbReference type="SMR" id="Q4V7C6"/>
<dbReference type="BioGRID" id="254877">
    <property type="interactions" value="1"/>
</dbReference>
<dbReference type="FunCoup" id="Q4V7C6">
    <property type="interactions" value="4406"/>
</dbReference>
<dbReference type="STRING" id="10116.ENSRNOP00000072183"/>
<dbReference type="GlyGen" id="Q4V7C6">
    <property type="glycosylation" value="1 site"/>
</dbReference>
<dbReference type="iPTMnet" id="Q4V7C6"/>
<dbReference type="PhosphoSitePlus" id="Q4V7C6"/>
<dbReference type="jPOST" id="Q4V7C6"/>
<dbReference type="PaxDb" id="10116-ENSRNOP00000068021"/>
<dbReference type="GeneID" id="295088"/>
<dbReference type="KEGG" id="rno:295088"/>
<dbReference type="UCSC" id="RGD:1310063">
    <property type="organism name" value="rat"/>
</dbReference>
<dbReference type="AGR" id="RGD:1310063"/>
<dbReference type="CTD" id="8833"/>
<dbReference type="RGD" id="1310063">
    <property type="gene designation" value="Gmps"/>
</dbReference>
<dbReference type="eggNOG" id="KOG1622">
    <property type="taxonomic scope" value="Eukaryota"/>
</dbReference>
<dbReference type="InParanoid" id="Q4V7C6"/>
<dbReference type="PhylomeDB" id="Q4V7C6"/>
<dbReference type="Reactome" id="R-RNO-73817">
    <property type="pathway name" value="Purine ribonucleoside monophosphate biosynthesis"/>
</dbReference>
<dbReference type="Reactome" id="R-RNO-9748787">
    <property type="pathway name" value="Azathioprine ADME"/>
</dbReference>
<dbReference type="SABIO-RK" id="Q4V7C6"/>
<dbReference type="UniPathway" id="UPA00189">
    <property type="reaction ID" value="UER00296"/>
</dbReference>
<dbReference type="PRO" id="PR:Q4V7C6"/>
<dbReference type="Proteomes" id="UP000002494">
    <property type="component" value="Unplaced"/>
</dbReference>
<dbReference type="GO" id="GO:0005829">
    <property type="term" value="C:cytosol"/>
    <property type="evidence" value="ECO:0000266"/>
    <property type="project" value="RGD"/>
</dbReference>
<dbReference type="GO" id="GO:0005524">
    <property type="term" value="F:ATP binding"/>
    <property type="evidence" value="ECO:0007669"/>
    <property type="project" value="UniProtKB-KW"/>
</dbReference>
<dbReference type="GO" id="GO:0019899">
    <property type="term" value="F:enzyme binding"/>
    <property type="evidence" value="ECO:0000314"/>
    <property type="project" value="RGD"/>
</dbReference>
<dbReference type="GO" id="GO:0003922">
    <property type="term" value="F:GMP synthase (glutamine-hydrolyzing) activity"/>
    <property type="evidence" value="ECO:0000314"/>
    <property type="project" value="RGD"/>
</dbReference>
<dbReference type="GO" id="GO:0003921">
    <property type="term" value="F:GMP synthase activity"/>
    <property type="evidence" value="ECO:0000314"/>
    <property type="project" value="RGD"/>
</dbReference>
<dbReference type="GO" id="GO:0006177">
    <property type="term" value="P:GMP biosynthetic process"/>
    <property type="evidence" value="ECO:0000314"/>
    <property type="project" value="RGD"/>
</dbReference>
<dbReference type="GO" id="GO:0032263">
    <property type="term" value="P:GMP salvage"/>
    <property type="evidence" value="ECO:0000314"/>
    <property type="project" value="MGI"/>
</dbReference>
<dbReference type="GO" id="GO:1901367">
    <property type="term" value="P:response to L-cysteine"/>
    <property type="evidence" value="ECO:0000314"/>
    <property type="project" value="RGD"/>
</dbReference>
<dbReference type="GO" id="GO:0009410">
    <property type="term" value="P:response to xenobiotic stimulus"/>
    <property type="evidence" value="ECO:0000270"/>
    <property type="project" value="RGD"/>
</dbReference>
<dbReference type="CDD" id="cd01742">
    <property type="entry name" value="GATase1_GMP_Synthase"/>
    <property type="match status" value="1"/>
</dbReference>
<dbReference type="CDD" id="cd01997">
    <property type="entry name" value="GMP_synthase_C"/>
    <property type="match status" value="1"/>
</dbReference>
<dbReference type="FunFam" id="3.30.300.10:FF:000008">
    <property type="entry name" value="GMP synthase [glutamine-hydrolyzing]"/>
    <property type="match status" value="1"/>
</dbReference>
<dbReference type="FunFam" id="3.30.300.10:FF:000009">
    <property type="entry name" value="GMP synthase [glutamine-hydrolyzing]"/>
    <property type="match status" value="1"/>
</dbReference>
<dbReference type="FunFam" id="3.40.50.620:FF:000044">
    <property type="entry name" value="GMP synthase [glutamine-hydrolyzing]"/>
    <property type="match status" value="1"/>
</dbReference>
<dbReference type="FunFam" id="3.40.50.880:FF:000013">
    <property type="entry name" value="GMP synthase [glutamine-hydrolyzing]"/>
    <property type="match status" value="1"/>
</dbReference>
<dbReference type="Gene3D" id="3.30.300.10">
    <property type="match status" value="2"/>
</dbReference>
<dbReference type="Gene3D" id="3.40.50.880">
    <property type="match status" value="1"/>
</dbReference>
<dbReference type="Gene3D" id="3.40.50.620">
    <property type="entry name" value="HUPs"/>
    <property type="match status" value="1"/>
</dbReference>
<dbReference type="InterPro" id="IPR029062">
    <property type="entry name" value="Class_I_gatase-like"/>
</dbReference>
<dbReference type="InterPro" id="IPR017926">
    <property type="entry name" value="GATASE"/>
</dbReference>
<dbReference type="InterPro" id="IPR001674">
    <property type="entry name" value="GMP_synth_C"/>
</dbReference>
<dbReference type="InterPro" id="IPR004739">
    <property type="entry name" value="GMP_synth_GATase"/>
</dbReference>
<dbReference type="InterPro" id="IPR025777">
    <property type="entry name" value="GMPS_ATP_PPase_dom"/>
</dbReference>
<dbReference type="InterPro" id="IPR022310">
    <property type="entry name" value="NAD/GMP_synthase"/>
</dbReference>
<dbReference type="InterPro" id="IPR014729">
    <property type="entry name" value="Rossmann-like_a/b/a_fold"/>
</dbReference>
<dbReference type="NCBIfam" id="TIGR00888">
    <property type="entry name" value="guaA_Nterm"/>
    <property type="match status" value="1"/>
</dbReference>
<dbReference type="NCBIfam" id="NF000848">
    <property type="entry name" value="PRK00074.1"/>
    <property type="match status" value="1"/>
</dbReference>
<dbReference type="PANTHER" id="PTHR11922:SF2">
    <property type="entry name" value="GMP SYNTHASE [GLUTAMINE-HYDROLYZING]"/>
    <property type="match status" value="1"/>
</dbReference>
<dbReference type="PANTHER" id="PTHR11922">
    <property type="entry name" value="GMP SYNTHASE-RELATED"/>
    <property type="match status" value="1"/>
</dbReference>
<dbReference type="Pfam" id="PF00117">
    <property type="entry name" value="GATase"/>
    <property type="match status" value="1"/>
</dbReference>
<dbReference type="Pfam" id="PF00958">
    <property type="entry name" value="GMP_synt_C"/>
    <property type="match status" value="1"/>
</dbReference>
<dbReference type="Pfam" id="PF02540">
    <property type="entry name" value="NAD_synthase"/>
    <property type="match status" value="1"/>
</dbReference>
<dbReference type="PRINTS" id="PR00097">
    <property type="entry name" value="ANTSNTHASEII"/>
</dbReference>
<dbReference type="PRINTS" id="PR00096">
    <property type="entry name" value="GATASE"/>
</dbReference>
<dbReference type="SUPFAM" id="SSF52402">
    <property type="entry name" value="Adenine nucleotide alpha hydrolases-like"/>
    <property type="match status" value="1"/>
</dbReference>
<dbReference type="SUPFAM" id="SSF52317">
    <property type="entry name" value="Class I glutamine amidotransferase-like"/>
    <property type="match status" value="1"/>
</dbReference>
<dbReference type="SUPFAM" id="SSF54810">
    <property type="entry name" value="GMP synthetase C-terminal dimerisation domain"/>
    <property type="match status" value="2"/>
</dbReference>
<dbReference type="PROSITE" id="PS51273">
    <property type="entry name" value="GATASE_TYPE_1"/>
    <property type="match status" value="1"/>
</dbReference>
<dbReference type="PROSITE" id="PS51553">
    <property type="entry name" value="GMPS_ATP_PPASE"/>
    <property type="match status" value="1"/>
</dbReference>
<accession>Q4V7C6</accession>
<protein>
    <recommendedName>
        <fullName>GMP synthase [glutamine-hydrolyzing]</fullName>
        <ecNumber evidence="4">6.3.5.2</ecNumber>
    </recommendedName>
    <alternativeName>
        <fullName>GMP synthetase</fullName>
    </alternativeName>
    <alternativeName>
        <fullName>Glutamine amidotransferase</fullName>
    </alternativeName>
</protein>
<evidence type="ECO:0000250" key="1">
    <source>
        <dbReference type="UniProtKB" id="P49915"/>
    </source>
</evidence>
<evidence type="ECO:0000255" key="2">
    <source>
        <dbReference type="PROSITE-ProRule" id="PRU00605"/>
    </source>
</evidence>
<evidence type="ECO:0000255" key="3">
    <source>
        <dbReference type="PROSITE-ProRule" id="PRU00886"/>
    </source>
</evidence>
<evidence type="ECO:0000269" key="4">
    <source>
    </source>
</evidence>
<evidence type="ECO:0000305" key="5">
    <source>
    </source>
</evidence>
<evidence type="ECO:0007744" key="6">
    <source>
    </source>
</evidence>
<feature type="initiator methionine" description="Removed" evidence="1">
    <location>
        <position position="1"/>
    </location>
</feature>
<feature type="chain" id="PRO_0000284367" description="GMP synthase [glutamine-hydrolyzing]">
    <location>
        <begin position="2"/>
        <end position="693"/>
    </location>
</feature>
<feature type="domain" description="Glutamine amidotransferase type-1" evidence="2">
    <location>
        <begin position="27"/>
        <end position="216"/>
    </location>
</feature>
<feature type="domain" description="GMPS ATP-PPase" evidence="3">
    <location>
        <begin position="217"/>
        <end position="435"/>
    </location>
</feature>
<feature type="active site" description="For GATase activity" evidence="2">
    <location>
        <position position="104"/>
    </location>
</feature>
<feature type="active site" description="For GATase activity" evidence="2">
    <location>
        <position position="190"/>
    </location>
</feature>
<feature type="active site" description="For GATase activity" evidence="2">
    <location>
        <position position="192"/>
    </location>
</feature>
<feature type="binding site" evidence="3">
    <location>
        <begin position="244"/>
        <end position="250"/>
    </location>
    <ligand>
        <name>ATP</name>
        <dbReference type="ChEBI" id="CHEBI:30616"/>
    </ligand>
</feature>
<feature type="binding site" evidence="1">
    <location>
        <position position="337"/>
    </location>
    <ligand>
        <name>XMP</name>
        <dbReference type="ChEBI" id="CHEBI:57464"/>
    </ligand>
</feature>
<feature type="binding site" evidence="1">
    <location>
        <position position="522"/>
    </location>
    <ligand>
        <name>XMP</name>
        <dbReference type="ChEBI" id="CHEBI:57464"/>
    </ligand>
</feature>
<feature type="binding site" evidence="1">
    <location>
        <position position="610"/>
    </location>
    <ligand>
        <name>XMP</name>
        <dbReference type="ChEBI" id="CHEBI:57464"/>
    </ligand>
</feature>
<feature type="binding site" evidence="1">
    <location>
        <position position="685"/>
    </location>
    <ligand>
        <name>XMP</name>
        <dbReference type="ChEBI" id="CHEBI:57464"/>
    </ligand>
</feature>
<feature type="binding site" evidence="1">
    <location>
        <position position="691"/>
    </location>
    <ligand>
        <name>XMP</name>
        <dbReference type="ChEBI" id="CHEBI:57464"/>
    </ligand>
</feature>
<feature type="modified residue" description="N-acetylalanine" evidence="1">
    <location>
        <position position="2"/>
    </location>
</feature>
<feature type="modified residue" description="Phosphoserine" evidence="1">
    <location>
        <position position="8"/>
    </location>
</feature>
<feature type="modified residue" description="N6-acetyllysine" evidence="1">
    <location>
        <position position="9"/>
    </location>
</feature>
<feature type="modified residue" description="Phosphothreonine" evidence="1">
    <location>
        <position position="318"/>
    </location>
</feature>
<feature type="modified residue" description="Phosphoserine" evidence="6">
    <location>
        <position position="332"/>
    </location>
</feature>
<sequence length="693" mass="76757">MALCNGDSKPENAGGDLKDGCHHYEGAVVILDAGAQYGKVIDRRVRELFVQSEIFPLETPAFAIKEQGFRAIIISGGPNSVYAEDAPWFDPAIFTIGKPVLGICYGMQMMNKVFGGTVHKKSVREDGVFNISMDNTCSLFRGLQKEEIVLLTHGDSVDKVADGFKVVARSGNIVAGIANESKKLYGVQFHPEVGLTENGKVILKNFLYDIAGCSGNFTVQNRELECIREIKEKVGTSKVLVLLSGGVDSTVCTALLNRALNQDQVIAVHIDNGFMRKRESQSVEEALKKLGIQVKVINAAHSFYNGTTTLPISDEDRTPRKRISKTLNMTTSPEEKRKIIGDTFVKIANEVIGEMSLKPEEVFLAQGTLRPDLIESASLVASGKAELIKTHHNDTELIRKLREEGKVIEPLKDFHKDEVRILGRELDLPEELVSRHPFPGPGLAIRVICAEEPYICKDFPETNNILKIVADFSASVKKPHTLLQRVKACTTEEDQEKLMEITSQHSLNAFLLPIKTVGVQGDCRSYSYVCGISSKDEPDWESLIFLARLIPRMCHNINRVVYIFGPPVKEPPTDVTPTFLTTGVLSTLRQADFEAHNILRESGYAGKISQMPVILTPLHFDRDPLQKQPSCQRSVVIRTFITSDFMTGVPATPGNEIPVEVVLKMVTEIKKIPGISRIMYDLTSKPPGTTEWE</sequence>